<accession>Q8CF97</accession>
<accession>Q7TNK5</accession>
<comment type="function">
    <text evidence="2 5 6">Deubiquitinating enzyme involved in DNA repair and reassembly of the Golgi apparatus and the endoplasmic reticulum following mitosis (PubMed:12473691, PubMed:15037600). Necessary for VCP-mediated reassembly of Golgi stacks after mitosis (PubMed:12473691, PubMed:15037600). Plays a role in VCP-mediated formation of transitional endoplasmic reticulum (tER) (PubMed:12473691, PubMed:15037600). Mediates dissociation of the ternary complex containing STX5A, NSFL1C and VCP (PubMed:12473691, PubMed:15037600). Also involved in DNA repair following phosphorylation by ATM or ATR: acts by catalyzing deubiquitination of SPRTN, thereby promoting SPRTN recruitment to chromatin and subsequent proteolytic cleavage of covalent DNA-protein cross-links (DPCs) (By similarity). Hydrolyzes 'Lys-11'- and 'Lys-48'-linked polyubiquitin chains (By similarity).</text>
</comment>
<comment type="catalytic activity">
    <reaction evidence="6">
        <text>Thiol-dependent hydrolysis of ester, thioester, amide, peptide and isopeptide bonds formed by the C-terminal Gly of ubiquitin (a 76-residue protein attached to proteins as an intracellular targeting signal).</text>
        <dbReference type="EC" id="3.4.19.12"/>
    </reaction>
</comment>
<comment type="subunit">
    <text evidence="5">Binds VCP and the ternary complex containing STX5A, NSFL1C and VCP.</text>
</comment>
<comment type="subcellular location">
    <subcellularLocation>
        <location evidence="2">Nucleus</location>
    </subcellularLocation>
    <subcellularLocation>
        <location evidence="2">Cytoplasm</location>
    </subcellularLocation>
    <subcellularLocation>
        <location evidence="5">Endoplasmic reticulum</location>
    </subcellularLocation>
    <subcellularLocation>
        <location evidence="5">Golgi apparatus</location>
        <location evidence="5">Golgi stack</location>
    </subcellularLocation>
    <text evidence="2 5">Associated with Golgi stacks and endoplasmic reticulum (PubMed:12473691). Displays cytoplasmic to nuclear translocation in response to DNA-protein cross-links (DPCs)-inducing agents (By similarity).</text>
</comment>
<comment type="tissue specificity">
    <text evidence="5">Widely expressed.</text>
</comment>
<comment type="PTM">
    <text evidence="2">Phosphorylated at Ser-1206 by ATM or ATR following induction of covalent DNA-protein cross-links (DPCs).</text>
</comment>
<reference key="1">
    <citation type="journal article" date="2002" name="J. Cell Biol.">
        <title>VCIP135, a novel essential factor for p97/p47-mediated membrane fusion, is required for Golgi and ER assembly in vivo.</title>
        <authorList>
            <person name="Uchiyama K."/>
            <person name="Jokitalo E."/>
            <person name="Kano F."/>
            <person name="Murata M."/>
            <person name="Zhang X."/>
            <person name="Canas B."/>
            <person name="Newman R."/>
            <person name="Rabouille C."/>
            <person name="Pappin D."/>
            <person name="Freemont P."/>
            <person name="Kondo H."/>
        </authorList>
    </citation>
    <scope>NUCLEOTIDE SEQUENCE [MRNA]</scope>
    <scope>PROTEIN SEQUENCE OF 870-878 AND 1095-1105</scope>
    <scope>FUNCTION</scope>
    <scope>SUBCELLULAR LOCATION</scope>
    <scope>INTERACTION WITH VCP</scope>
    <scope>IDENTIFICATION BY MASS SPECTROMETRY</scope>
</reference>
<reference key="2">
    <citation type="submission" date="2004-06" db="EMBL/GenBank/DDBJ databases">
        <authorList>
            <person name="Kondo H."/>
            <person name="Uchiyama K."/>
            <person name="Kondo H."/>
        </authorList>
    </citation>
    <scope>SEQUENCE REVISION TO 7</scope>
</reference>
<reference key="3">
    <citation type="journal article" date="2004" name="J. Cell Biol.">
        <title>VCIP135 acts as a deubiquitinating enzyme during p97-p47-mediated reassembly of mitotic Golgi fragments.</title>
        <authorList>
            <person name="Wang Y."/>
            <person name="Satoh A."/>
            <person name="Warren G."/>
            <person name="Meyer H.H."/>
        </authorList>
    </citation>
    <scope>NUCLEOTIDE SEQUENCE [MRNA]</scope>
    <scope>FUNCTION</scope>
    <scope>CATALYTIC ACTIVITY</scope>
    <scope>MUTAGENESIS OF CYS-218</scope>
    <source>
        <tissue>Liver</tissue>
    </source>
</reference>
<reference key="4">
    <citation type="journal article" date="2012" name="Nat. Commun.">
        <title>Quantitative maps of protein phosphorylation sites across 14 different rat organs and tissues.</title>
        <authorList>
            <person name="Lundby A."/>
            <person name="Secher A."/>
            <person name="Lage K."/>
            <person name="Nordsborg N.B."/>
            <person name="Dmytriyev A."/>
            <person name="Lundby C."/>
            <person name="Olsen J.V."/>
        </authorList>
    </citation>
    <scope>PHOSPHORYLATION [LARGE SCALE ANALYSIS] AT SER-746 AND SER-1197</scope>
    <scope>IDENTIFICATION BY MASS SPECTROMETRY [LARGE SCALE ANALYSIS]</scope>
</reference>
<name>VCIP1_RAT</name>
<dbReference type="EC" id="3.4.19.12" evidence="6"/>
<dbReference type="EMBL" id="AB045378">
    <property type="protein sequence ID" value="BAC44841.2"/>
    <property type="molecule type" value="mRNA"/>
</dbReference>
<dbReference type="EMBL" id="AF289091">
    <property type="protein sequence ID" value="AAQ14350.1"/>
    <property type="molecule type" value="mRNA"/>
</dbReference>
<dbReference type="RefSeq" id="NP_789827.3">
    <property type="nucleotide sequence ID" value="NM_176857.3"/>
</dbReference>
<dbReference type="PDB" id="2MX2">
    <property type="method" value="NMR"/>
    <property type="chains" value="A=772-852"/>
</dbReference>
<dbReference type="PDBsum" id="2MX2"/>
<dbReference type="SMR" id="Q8CF97"/>
<dbReference type="FunCoup" id="Q8CF97">
    <property type="interactions" value="3296"/>
</dbReference>
<dbReference type="STRING" id="10116.ENSRNOP00000009136"/>
<dbReference type="MEROPS" id="C64.006"/>
<dbReference type="GlyGen" id="Q8CF97">
    <property type="glycosylation" value="2 sites"/>
</dbReference>
<dbReference type="iPTMnet" id="Q8CF97"/>
<dbReference type="PhosphoSitePlus" id="Q8CF97"/>
<dbReference type="jPOST" id="Q8CF97"/>
<dbReference type="PaxDb" id="10116-ENSRNOP00000009136"/>
<dbReference type="Ensembl" id="ENSRNOT00000009136.5">
    <property type="protein sequence ID" value="ENSRNOP00000009136.3"/>
    <property type="gene ID" value="ENSRNOG00000006980.5"/>
</dbReference>
<dbReference type="GeneID" id="286761"/>
<dbReference type="KEGG" id="rno:286761"/>
<dbReference type="UCSC" id="RGD:708520">
    <property type="organism name" value="rat"/>
</dbReference>
<dbReference type="AGR" id="RGD:708520"/>
<dbReference type="CTD" id="80124"/>
<dbReference type="RGD" id="708520">
    <property type="gene designation" value="Vcpip1"/>
</dbReference>
<dbReference type="eggNOG" id="KOG4345">
    <property type="taxonomic scope" value="Eukaryota"/>
</dbReference>
<dbReference type="GeneTree" id="ENSGT00390000002854"/>
<dbReference type="HOGENOM" id="CLU_009674_0_0_1"/>
<dbReference type="InParanoid" id="Q8CF97"/>
<dbReference type="OMA" id="KHSTETD"/>
<dbReference type="OrthoDB" id="10012024at2759"/>
<dbReference type="PhylomeDB" id="Q8CF97"/>
<dbReference type="TreeFam" id="TF329469"/>
<dbReference type="Reactome" id="R-RNO-5689896">
    <property type="pathway name" value="Ovarian tumor domain proteases"/>
</dbReference>
<dbReference type="PRO" id="PR:Q8CF97"/>
<dbReference type="Proteomes" id="UP000002494">
    <property type="component" value="Chromosome 5"/>
</dbReference>
<dbReference type="Bgee" id="ENSRNOG00000006980">
    <property type="expression patterns" value="Expressed in testis and 18 other cell types or tissues"/>
</dbReference>
<dbReference type="GO" id="GO:0005783">
    <property type="term" value="C:endoplasmic reticulum"/>
    <property type="evidence" value="ECO:0007669"/>
    <property type="project" value="UniProtKB-SubCell"/>
</dbReference>
<dbReference type="GO" id="GO:0005795">
    <property type="term" value="C:Golgi stack"/>
    <property type="evidence" value="ECO:0007669"/>
    <property type="project" value="UniProtKB-SubCell"/>
</dbReference>
<dbReference type="GO" id="GO:0005634">
    <property type="term" value="C:nucleus"/>
    <property type="evidence" value="ECO:0000250"/>
    <property type="project" value="UniProtKB"/>
</dbReference>
<dbReference type="GO" id="GO:0045202">
    <property type="term" value="C:synapse"/>
    <property type="evidence" value="ECO:0000266"/>
    <property type="project" value="RGD"/>
</dbReference>
<dbReference type="GO" id="GO:0004843">
    <property type="term" value="F:cysteine-type deubiquitinase activity"/>
    <property type="evidence" value="ECO:0000314"/>
    <property type="project" value="UniProtKB"/>
</dbReference>
<dbReference type="GO" id="GO:0006974">
    <property type="term" value="P:DNA damage response"/>
    <property type="evidence" value="ECO:0000250"/>
    <property type="project" value="UniProtKB"/>
</dbReference>
<dbReference type="GO" id="GO:0016320">
    <property type="term" value="P:endoplasmic reticulum membrane fusion"/>
    <property type="evidence" value="ECO:0000314"/>
    <property type="project" value="RGD"/>
</dbReference>
<dbReference type="GO" id="GO:0007030">
    <property type="term" value="P:Golgi organization"/>
    <property type="evidence" value="ECO:0000315"/>
    <property type="project" value="RGD"/>
</dbReference>
<dbReference type="GO" id="GO:0090168">
    <property type="term" value="P:Golgi reassembly"/>
    <property type="evidence" value="ECO:0000314"/>
    <property type="project" value="RGD"/>
</dbReference>
<dbReference type="GO" id="GO:0016579">
    <property type="term" value="P:protein deubiquitination"/>
    <property type="evidence" value="ECO:0000250"/>
    <property type="project" value="UniProtKB"/>
</dbReference>
<dbReference type="GO" id="GO:0035871">
    <property type="term" value="P:protein K11-linked deubiquitination"/>
    <property type="evidence" value="ECO:0000250"/>
    <property type="project" value="UniProtKB"/>
</dbReference>
<dbReference type="GO" id="GO:0071108">
    <property type="term" value="P:protein K48-linked deubiquitination"/>
    <property type="evidence" value="ECO:0000250"/>
    <property type="project" value="UniProtKB"/>
</dbReference>
<dbReference type="GO" id="GO:0016567">
    <property type="term" value="P:protein ubiquitination"/>
    <property type="evidence" value="ECO:0000314"/>
    <property type="project" value="UniProtKB"/>
</dbReference>
<dbReference type="GO" id="GO:0106300">
    <property type="term" value="P:protein-DNA covalent cross-linking repair"/>
    <property type="evidence" value="ECO:0000250"/>
    <property type="project" value="UniProtKB"/>
</dbReference>
<dbReference type="GO" id="GO:0006508">
    <property type="term" value="P:proteolysis"/>
    <property type="evidence" value="ECO:0007669"/>
    <property type="project" value="UniProtKB-KW"/>
</dbReference>
<dbReference type="GO" id="GO:1905634">
    <property type="term" value="P:regulation of protein localization to chromatin"/>
    <property type="evidence" value="ECO:0000250"/>
    <property type="project" value="UniProtKB"/>
</dbReference>
<dbReference type="CDD" id="cd22769">
    <property type="entry name" value="OTU_VCIP135"/>
    <property type="match status" value="1"/>
</dbReference>
<dbReference type="CDD" id="cd17059">
    <property type="entry name" value="Ubl_OTU1"/>
    <property type="match status" value="1"/>
</dbReference>
<dbReference type="FunFam" id="3.10.20.90:FF:000146">
    <property type="entry name" value="deubiquitinating protein VCIP135 isoform X1"/>
    <property type="match status" value="1"/>
</dbReference>
<dbReference type="FunFam" id="3.90.70.80:FF:000004">
    <property type="entry name" value="deubiquitinating protein VCIP135 isoform X2"/>
    <property type="match status" value="1"/>
</dbReference>
<dbReference type="Gene3D" id="3.90.70.80">
    <property type="match status" value="1"/>
</dbReference>
<dbReference type="Gene3D" id="3.10.20.90">
    <property type="entry name" value="Phosphatidylinositol 3-kinase Catalytic Subunit, Chain A, domain 1"/>
    <property type="match status" value="1"/>
</dbReference>
<dbReference type="InterPro" id="IPR048857">
    <property type="entry name" value="OTU1_Ubl"/>
</dbReference>
<dbReference type="InterPro" id="IPR003323">
    <property type="entry name" value="OTU_dom"/>
</dbReference>
<dbReference type="InterPro" id="IPR029071">
    <property type="entry name" value="Ubiquitin-like_domsf"/>
</dbReference>
<dbReference type="InterPro" id="IPR039087">
    <property type="entry name" value="VCPIP1"/>
</dbReference>
<dbReference type="InterPro" id="IPR045827">
    <property type="entry name" value="VCPIP1_N"/>
</dbReference>
<dbReference type="PANTHER" id="PTHR14843">
    <property type="entry name" value="DEUBIQUITINATING PROTEIN VCIP135"/>
    <property type="match status" value="1"/>
</dbReference>
<dbReference type="PANTHER" id="PTHR14843:SF2">
    <property type="entry name" value="DEUBIQUITINATING PROTEIN VCPIP1"/>
    <property type="match status" value="1"/>
</dbReference>
<dbReference type="Pfam" id="PF02338">
    <property type="entry name" value="OTU"/>
    <property type="match status" value="1"/>
</dbReference>
<dbReference type="Pfam" id="PF21403">
    <property type="entry name" value="OTU1_UBXL"/>
    <property type="match status" value="1"/>
</dbReference>
<dbReference type="Pfam" id="PF19437">
    <property type="entry name" value="VCIP135_N"/>
    <property type="match status" value="1"/>
</dbReference>
<dbReference type="SUPFAM" id="SSF54236">
    <property type="entry name" value="Ubiquitin-like"/>
    <property type="match status" value="1"/>
</dbReference>
<dbReference type="PROSITE" id="PS50802">
    <property type="entry name" value="OTU"/>
    <property type="match status" value="1"/>
</dbReference>
<protein>
    <recommendedName>
        <fullName evidence="8">Deubiquitinating protein VCPIP1</fullName>
        <ecNumber evidence="6">3.4.19.12</ecNumber>
    </recommendedName>
    <alternativeName>
        <fullName evidence="8">Valosin-containing protein p97/p47 complex-interacting protein 1</fullName>
    </alternativeName>
    <alternativeName>
        <fullName evidence="7">Valosin-containing protein p97/p47 complex-interacting protein p135</fullName>
        <shortName evidence="7">VCP/p47 complex-interacting 135-kDa protein</shortName>
    </alternativeName>
</protein>
<sequence length="1221" mass="134566">MSQPPPPPPLPPPPPPPEAPQTSSSLAAAATPGGLSKRRDRRILSGSCPDPKCQARLFFPASGSVSIECTECGQRHEQQQLLGVEEVTDPDVVLHNLLRNALLGVTGAPKKNTELVKVMGLSNYHCKLLSPILARYGMDKQTGRAKLLRDMNQGELFDCALLGDRAFLIEPEHVNTVGYGKDRSGSLLYLHDTLEDIKRANKSQECLIPVHVDGDGHCLVHAVSRALVGRELFWHALRENLKQHFQQHLARYQALFHDFIDAAEWEDIINECDPLFVPPEGVPLGLRNIHIFGLANVLHRPIILLDSLSGMRSSGDYSATFLPGLIPAEKCTGRDGHLNKPICIAWSSSGRNHYIPLVGIKGAALPKLPMNLLPKAWGVPQDLIKKYIKLEEDGGCVIGGDRSLQDKYLLRLVAAMEEVFMDKHGIHPSLVADVHQYFYRRTGVIGVQPEEVTAAAKKAVMDNRLHKCLLCGALSELHVPPEWLAPGGKLYNLAKSTHGQLRPDKNYSFPLNNLVCSYDPVKDVLLPDYGLSNLTACNWCHGTSVRRVRGDGSIVYLDGDRTNSRSTGGKCGCGFKHFWEGKEYDNLPEAFPITLEWGGRVVRETVYWFQYESDPSLNSNVYDVAMKLVTKHFPGEFGSEILVQKVVHTILHQTAKKNPDDYTPVNIDGAHAQRIGDVQGQELESQLPTKIILTGQKTKTLHKEELNMSKTERTIQQNITEQASVMQKRKTEKLKQEQKGQPRTVSPSTIRDGPSSAPATPTKAPYSPTTSKEKKIRITTNDGRQSMVTLKSSTTFFELQESIAREFNIPPYLQCIRYGFPPKELMPPQAGMEKEPVPLQHGDRITIEILKGKAEGGPSTAAHSAHTVRQEEIAVTGKLSSKELQEQADKEMYSLCLLATLMGEDVWSYAKGLPHMFQQGGVFYNIMKKTMGMADGKHCTFPHLPGKTFVYNASEDRLELCVDAAGHFPIGPDVEDLVKEAVSQVRAEATTRSRESSPSHGLLKLGSGGVVKKKSEQLHNVTAFQGKGHSLGTASSNPHMDPRARETLAVRKHNTGTDFSNSSIKTEPPVFTAASSNSELIRIAPGVVTMRDGRQIDPDVVEAQRKKLQEMVSSIQASMDKHLRDQSTEQTPSDLSQRKVEAVSSSVRPGNLQTGLPESFSLTGGTENLNTETTDSRVADVLGAAFATRSKAQKENSMEEPEEMDSQDAETTNTTEPMDHS</sequence>
<proteinExistence type="evidence at protein level"/>
<organism>
    <name type="scientific">Rattus norvegicus</name>
    <name type="common">Rat</name>
    <dbReference type="NCBI Taxonomy" id="10116"/>
    <lineage>
        <taxon>Eukaryota</taxon>
        <taxon>Metazoa</taxon>
        <taxon>Chordata</taxon>
        <taxon>Craniata</taxon>
        <taxon>Vertebrata</taxon>
        <taxon>Euteleostomi</taxon>
        <taxon>Mammalia</taxon>
        <taxon>Eutheria</taxon>
        <taxon>Euarchontoglires</taxon>
        <taxon>Glires</taxon>
        <taxon>Rodentia</taxon>
        <taxon>Myomorpha</taxon>
        <taxon>Muroidea</taxon>
        <taxon>Muridae</taxon>
        <taxon>Murinae</taxon>
        <taxon>Rattus</taxon>
    </lineage>
</organism>
<keyword id="KW-0002">3D-structure</keyword>
<keyword id="KW-0007">Acetylation</keyword>
<keyword id="KW-0963">Cytoplasm</keyword>
<keyword id="KW-0903">Direct protein sequencing</keyword>
<keyword id="KW-0227">DNA damage</keyword>
<keyword id="KW-0234">DNA repair</keyword>
<keyword id="KW-0256">Endoplasmic reticulum</keyword>
<keyword id="KW-0333">Golgi apparatus</keyword>
<keyword id="KW-0378">Hydrolase</keyword>
<keyword id="KW-0539">Nucleus</keyword>
<keyword id="KW-0597">Phosphoprotein</keyword>
<keyword id="KW-0645">Protease</keyword>
<keyword id="KW-1185">Reference proteome</keyword>
<keyword id="KW-0788">Thiol protease</keyword>
<keyword id="KW-0833">Ubl conjugation pathway</keyword>
<evidence type="ECO:0000250" key="1">
    <source>
        <dbReference type="UniProtKB" id="Q96FW1"/>
    </source>
</evidence>
<evidence type="ECO:0000250" key="2">
    <source>
        <dbReference type="UniProtKB" id="Q96JH7"/>
    </source>
</evidence>
<evidence type="ECO:0000255" key="3">
    <source>
        <dbReference type="PROSITE-ProRule" id="PRU00139"/>
    </source>
</evidence>
<evidence type="ECO:0000256" key="4">
    <source>
        <dbReference type="SAM" id="MobiDB-lite"/>
    </source>
</evidence>
<evidence type="ECO:0000269" key="5">
    <source>
    </source>
</evidence>
<evidence type="ECO:0000269" key="6">
    <source>
    </source>
</evidence>
<evidence type="ECO:0000303" key="7">
    <source>
    </source>
</evidence>
<evidence type="ECO:0000305" key="8"/>
<evidence type="ECO:0000305" key="9">
    <source>
    </source>
</evidence>
<evidence type="ECO:0000312" key="10">
    <source>
        <dbReference type="RGD" id="708520"/>
    </source>
</evidence>
<evidence type="ECO:0007744" key="11">
    <source>
    </source>
</evidence>
<evidence type="ECO:0007829" key="12">
    <source>
        <dbReference type="PDB" id="2MX2"/>
    </source>
</evidence>
<feature type="chain" id="PRO_0000065771" description="Deubiquitinating protein VCPIP1">
    <location>
        <begin position="1"/>
        <end position="1221"/>
    </location>
</feature>
<feature type="domain" description="OTU" evidence="3">
    <location>
        <begin position="207"/>
        <end position="360"/>
    </location>
</feature>
<feature type="region of interest" description="Disordered" evidence="4">
    <location>
        <begin position="1"/>
        <end position="40"/>
    </location>
</feature>
<feature type="region of interest" description="Disordered" evidence="4">
    <location>
        <begin position="724"/>
        <end position="778"/>
    </location>
</feature>
<feature type="region of interest" description="Disordered" evidence="4">
    <location>
        <begin position="988"/>
        <end position="1009"/>
    </location>
</feature>
<feature type="region of interest" description="Disordered" evidence="4">
    <location>
        <begin position="1117"/>
        <end position="1177"/>
    </location>
</feature>
<feature type="region of interest" description="Disordered" evidence="4">
    <location>
        <begin position="1189"/>
        <end position="1221"/>
    </location>
</feature>
<feature type="compositionally biased region" description="Pro residues" evidence="4">
    <location>
        <begin position="1"/>
        <end position="19"/>
    </location>
</feature>
<feature type="compositionally biased region" description="Low complexity" evidence="4">
    <location>
        <begin position="754"/>
        <end position="770"/>
    </location>
</feature>
<feature type="compositionally biased region" description="Polar residues" evidence="4">
    <location>
        <begin position="1143"/>
        <end position="1156"/>
    </location>
</feature>
<feature type="compositionally biased region" description="Low complexity" evidence="4">
    <location>
        <begin position="1162"/>
        <end position="1173"/>
    </location>
</feature>
<feature type="compositionally biased region" description="Acidic residues" evidence="4">
    <location>
        <begin position="1198"/>
        <end position="1208"/>
    </location>
</feature>
<feature type="compositionally biased region" description="Polar residues" evidence="4">
    <location>
        <begin position="1209"/>
        <end position="1221"/>
    </location>
</feature>
<feature type="active site" evidence="1">
    <location>
        <position position="215"/>
    </location>
</feature>
<feature type="active site" description="Nucleophile" evidence="9">
    <location>
        <position position="218"/>
    </location>
</feature>
<feature type="active site" evidence="1">
    <location>
        <position position="353"/>
    </location>
</feature>
<feature type="modified residue" description="N6-acetyllysine" evidence="2">
    <location>
        <position position="407"/>
    </location>
</feature>
<feature type="modified residue" description="Phosphoserine" evidence="11">
    <location>
        <position position="746"/>
    </location>
</feature>
<feature type="modified residue" description="Phosphoserine" evidence="2">
    <location>
        <position position="756"/>
    </location>
</feature>
<feature type="modified residue" description="Phosphothreonine" evidence="2">
    <location>
        <position position="762"/>
    </location>
</feature>
<feature type="modified residue" description="Phosphoserine" evidence="2">
    <location>
        <position position="767"/>
    </location>
</feature>
<feature type="modified residue" description="Phosphoserine" evidence="2">
    <location>
        <position position="993"/>
    </location>
</feature>
<feature type="modified residue" description="Phosphoserine" evidence="2">
    <location>
        <position position="997"/>
    </location>
</feature>
<feature type="modified residue" description="Phosphoserine" evidence="2">
    <location>
        <position position="1076"/>
    </location>
</feature>
<feature type="modified residue" description="Phosphoserine" evidence="11">
    <location>
        <position position="1197"/>
    </location>
</feature>
<feature type="modified residue" description="Phosphoserine" evidence="2">
    <location>
        <position position="1206"/>
    </location>
</feature>
<feature type="mutagenesis site" description="Loss of deubiquitinating activity and ability to promote VCP-mediated Golgi membrane fusion." evidence="6">
    <original>C</original>
    <variation>A</variation>
    <variation>S</variation>
    <location>
        <position position="218"/>
    </location>
</feature>
<feature type="sequence conflict" description="In Ref. 3; AAQ14350." evidence="8" ref="3">
    <original>P</original>
    <variation>L</variation>
    <location>
        <position position="7"/>
    </location>
</feature>
<feature type="sequence conflict" description="In Ref. 3; AAQ14350." evidence="8" ref="3">
    <original>D</original>
    <variation>N</variation>
    <location>
        <position position="158"/>
    </location>
</feature>
<feature type="sequence conflict" description="In Ref. 3; AAQ14350." evidence="8" ref="3">
    <original>R</original>
    <variation>K</variation>
    <location>
        <position position="603"/>
    </location>
</feature>
<feature type="sequence conflict" description="In Ref. 3; AAQ14350." evidence="8" ref="3">
    <original>H</original>
    <variation>L</variation>
    <location>
        <position position="652"/>
    </location>
</feature>
<feature type="sequence conflict" description="In Ref. 3; AAQ14350." evidence="8" ref="3">
    <original>I</original>
    <variation>V</variation>
    <location>
        <position position="675"/>
    </location>
</feature>
<feature type="strand" evidence="12">
    <location>
        <begin position="776"/>
        <end position="780"/>
    </location>
</feature>
<feature type="turn" evidence="12">
    <location>
        <begin position="781"/>
        <end position="783"/>
    </location>
</feature>
<feature type="strand" evidence="12">
    <location>
        <begin position="784"/>
        <end position="788"/>
    </location>
</feature>
<feature type="helix" evidence="12">
    <location>
        <begin position="796"/>
        <end position="806"/>
    </location>
</feature>
<feature type="turn" evidence="12">
    <location>
        <begin position="819"/>
        <end position="822"/>
    </location>
</feature>
<feature type="turn" evidence="12">
    <location>
        <begin position="830"/>
        <end position="834"/>
    </location>
</feature>
<gene>
    <name evidence="10" type="primary">Vcpip1</name>
    <name evidence="7" type="synonym">Vcip135</name>
</gene>